<reference key="1">
    <citation type="journal article" date="2005" name="Nat. Biotechnol.">
        <title>The complete genome sequence of the meat-borne lactic acid bacterium Lactobacillus sakei 23K.</title>
        <authorList>
            <person name="Chaillou S."/>
            <person name="Champomier-Verges M.-C."/>
            <person name="Cornet M."/>
            <person name="Crutz-Le Coq A.-M."/>
            <person name="Dudez A.-M."/>
            <person name="Martin V."/>
            <person name="Beaufils S."/>
            <person name="Darbon-Rongere E."/>
            <person name="Bossy R."/>
            <person name="Loux V."/>
            <person name="Zagorec M."/>
        </authorList>
    </citation>
    <scope>NUCLEOTIDE SEQUENCE [LARGE SCALE GENOMIC DNA]</scope>
    <source>
        <strain>23K</strain>
    </source>
</reference>
<comment type="function">
    <text evidence="1">Bifunctional serine/threonine kinase and phosphorylase involved in the regulation of the pyruvate, phosphate dikinase (PPDK) by catalyzing its phosphorylation/dephosphorylation.</text>
</comment>
<comment type="catalytic activity">
    <reaction evidence="1">
        <text>N(tele)-phospho-L-histidyl/L-threonyl-[pyruvate, phosphate dikinase] + ADP = N(tele)-phospho-L-histidyl/O-phospho-L-threonyl-[pyruvate, phosphate dikinase] + AMP + H(+)</text>
        <dbReference type="Rhea" id="RHEA:43692"/>
        <dbReference type="Rhea" id="RHEA-COMP:10650"/>
        <dbReference type="Rhea" id="RHEA-COMP:10651"/>
        <dbReference type="ChEBI" id="CHEBI:15378"/>
        <dbReference type="ChEBI" id="CHEBI:30013"/>
        <dbReference type="ChEBI" id="CHEBI:61977"/>
        <dbReference type="ChEBI" id="CHEBI:83586"/>
        <dbReference type="ChEBI" id="CHEBI:456215"/>
        <dbReference type="ChEBI" id="CHEBI:456216"/>
        <dbReference type="EC" id="2.7.11.32"/>
    </reaction>
</comment>
<comment type="catalytic activity">
    <reaction evidence="1">
        <text>N(tele)-phospho-L-histidyl/O-phospho-L-threonyl-[pyruvate, phosphate dikinase] + phosphate + H(+) = N(tele)-phospho-L-histidyl/L-threonyl-[pyruvate, phosphate dikinase] + diphosphate</text>
        <dbReference type="Rhea" id="RHEA:43696"/>
        <dbReference type="Rhea" id="RHEA-COMP:10650"/>
        <dbReference type="Rhea" id="RHEA-COMP:10651"/>
        <dbReference type="ChEBI" id="CHEBI:15378"/>
        <dbReference type="ChEBI" id="CHEBI:30013"/>
        <dbReference type="ChEBI" id="CHEBI:33019"/>
        <dbReference type="ChEBI" id="CHEBI:43474"/>
        <dbReference type="ChEBI" id="CHEBI:61977"/>
        <dbReference type="ChEBI" id="CHEBI:83586"/>
        <dbReference type="EC" id="2.7.4.27"/>
    </reaction>
</comment>
<comment type="similarity">
    <text evidence="1">Belongs to the pyruvate, phosphate/water dikinase regulatory protein family. PDRP subfamily.</text>
</comment>
<sequence length="280" mass="30782">MSQSTPLTVFVLSDSVGQTALQLAQAALAQYPNVKPDIIRFPFVHSVDKLTDVLSKAVPEETIVVHTLATTGLSEIAQNYCDAKKIASFDMMSPLTKLITAKTSLAPSGEAGALHHLNDRYFDRISAMEFAVMYDDGKDPHGFLEADIVLLGVSRTSKTPLSLFLANRNIKVANLPIVPQAHIPDEIWHVDPKKIIGLMNTPEVLNNIRRERMIAYGLNPDTTYSDMDEIKAELDFAQDLYDKIGCQVINVANRSIEETAAIILEQTGLDFASSSTDHVN</sequence>
<name>PDRP1_LATSS</name>
<proteinExistence type="inferred from homology"/>
<feature type="chain" id="PRO_0000316690" description="Putative pyruvate, phosphate dikinase regulatory protein 1">
    <location>
        <begin position="1"/>
        <end position="280"/>
    </location>
</feature>
<feature type="binding site" evidence="1">
    <location>
        <begin position="152"/>
        <end position="159"/>
    </location>
    <ligand>
        <name>ADP</name>
        <dbReference type="ChEBI" id="CHEBI:456216"/>
    </ligand>
</feature>
<dbReference type="EC" id="2.7.11.32" evidence="1"/>
<dbReference type="EC" id="2.7.4.27" evidence="1"/>
<dbReference type="EMBL" id="CR936503">
    <property type="protein sequence ID" value="CAI55173.1"/>
    <property type="molecule type" value="Genomic_DNA"/>
</dbReference>
<dbReference type="RefSeq" id="WP_011374575.1">
    <property type="nucleotide sequence ID" value="NC_007576.1"/>
</dbReference>
<dbReference type="SMR" id="Q38XA8"/>
<dbReference type="STRING" id="314315.LCA_0872"/>
<dbReference type="KEGG" id="lsa:LCA_0872"/>
<dbReference type="eggNOG" id="COG1806">
    <property type="taxonomic scope" value="Bacteria"/>
</dbReference>
<dbReference type="HOGENOM" id="CLU_046206_2_1_9"/>
<dbReference type="OrthoDB" id="9782201at2"/>
<dbReference type="Proteomes" id="UP000002707">
    <property type="component" value="Chromosome"/>
</dbReference>
<dbReference type="GO" id="GO:0043531">
    <property type="term" value="F:ADP binding"/>
    <property type="evidence" value="ECO:0007669"/>
    <property type="project" value="UniProtKB-UniRule"/>
</dbReference>
<dbReference type="GO" id="GO:0005524">
    <property type="term" value="F:ATP binding"/>
    <property type="evidence" value="ECO:0007669"/>
    <property type="project" value="InterPro"/>
</dbReference>
<dbReference type="GO" id="GO:0016776">
    <property type="term" value="F:phosphotransferase activity, phosphate group as acceptor"/>
    <property type="evidence" value="ECO:0007669"/>
    <property type="project" value="UniProtKB-UniRule"/>
</dbReference>
<dbReference type="GO" id="GO:0004674">
    <property type="term" value="F:protein serine/threonine kinase activity"/>
    <property type="evidence" value="ECO:0007669"/>
    <property type="project" value="UniProtKB-UniRule"/>
</dbReference>
<dbReference type="HAMAP" id="MF_00921">
    <property type="entry name" value="PDRP"/>
    <property type="match status" value="1"/>
</dbReference>
<dbReference type="InterPro" id="IPR005177">
    <property type="entry name" value="Kinase-pyrophosphorylase"/>
</dbReference>
<dbReference type="InterPro" id="IPR026565">
    <property type="entry name" value="PPDK_reg"/>
</dbReference>
<dbReference type="NCBIfam" id="NF003742">
    <property type="entry name" value="PRK05339.1"/>
    <property type="match status" value="1"/>
</dbReference>
<dbReference type="PANTHER" id="PTHR31756">
    <property type="entry name" value="PYRUVATE, PHOSPHATE DIKINASE REGULATORY PROTEIN 1, CHLOROPLASTIC"/>
    <property type="match status" value="1"/>
</dbReference>
<dbReference type="PANTHER" id="PTHR31756:SF3">
    <property type="entry name" value="PYRUVATE, PHOSPHATE DIKINASE REGULATORY PROTEIN 1, CHLOROPLASTIC"/>
    <property type="match status" value="1"/>
</dbReference>
<dbReference type="Pfam" id="PF03618">
    <property type="entry name" value="Kinase-PPPase"/>
    <property type="match status" value="1"/>
</dbReference>
<accession>Q38XA8</accession>
<organism>
    <name type="scientific">Latilactobacillus sakei subsp. sakei (strain 23K)</name>
    <name type="common">Lactobacillus sakei subsp. sakei</name>
    <dbReference type="NCBI Taxonomy" id="314315"/>
    <lineage>
        <taxon>Bacteria</taxon>
        <taxon>Bacillati</taxon>
        <taxon>Bacillota</taxon>
        <taxon>Bacilli</taxon>
        <taxon>Lactobacillales</taxon>
        <taxon>Lactobacillaceae</taxon>
        <taxon>Latilactobacillus</taxon>
    </lineage>
</organism>
<evidence type="ECO:0000255" key="1">
    <source>
        <dbReference type="HAMAP-Rule" id="MF_00921"/>
    </source>
</evidence>
<gene>
    <name type="ordered locus">LCA_0872</name>
</gene>
<protein>
    <recommendedName>
        <fullName evidence="1">Putative pyruvate, phosphate dikinase regulatory protein 1</fullName>
        <shortName evidence="1">PPDK regulatory protein 1</shortName>
        <ecNumber evidence="1">2.7.11.32</ecNumber>
        <ecNumber evidence="1">2.7.4.27</ecNumber>
    </recommendedName>
</protein>
<keyword id="KW-0418">Kinase</keyword>
<keyword id="KW-0547">Nucleotide-binding</keyword>
<keyword id="KW-1185">Reference proteome</keyword>
<keyword id="KW-0723">Serine/threonine-protein kinase</keyword>
<keyword id="KW-0808">Transferase</keyword>